<evidence type="ECO:0000250" key="1"/>
<evidence type="ECO:0000256" key="2">
    <source>
        <dbReference type="SAM" id="MobiDB-lite"/>
    </source>
</evidence>
<evidence type="ECO:0000305" key="3"/>
<accession>Q2LYY4</accession>
<dbReference type="EMBL" id="CH379069">
    <property type="protein sequence ID" value="EAL29725.2"/>
    <property type="molecule type" value="Genomic_DNA"/>
</dbReference>
<dbReference type="RefSeq" id="XP_001353989.2">
    <property type="nucleotide sequence ID" value="XM_001353953.3"/>
</dbReference>
<dbReference type="FunCoup" id="Q2LYY4">
    <property type="interactions" value="306"/>
</dbReference>
<dbReference type="STRING" id="46245.Q2LYY4"/>
<dbReference type="EnsemblMetazoa" id="FBtr0277043">
    <property type="protein sequence ID" value="FBpp0275481"/>
    <property type="gene ID" value="FBgn0079934"/>
</dbReference>
<dbReference type="GeneID" id="4813628"/>
<dbReference type="KEGG" id="dpo:4813628"/>
<dbReference type="CTD" id="79866"/>
<dbReference type="eggNOG" id="ENOG502S85H">
    <property type="taxonomic scope" value="Eukaryota"/>
</dbReference>
<dbReference type="HOGENOM" id="CLU_464825_0_0_1"/>
<dbReference type="InParanoid" id="Q2LYY4"/>
<dbReference type="OMA" id="QTMFAGR"/>
<dbReference type="Proteomes" id="UP000001819">
    <property type="component" value="Chromosome X"/>
</dbReference>
<dbReference type="Bgee" id="FBgn0079934">
    <property type="expression patterns" value="Expressed in female reproductive system and 2 other cell types or tissues"/>
</dbReference>
<dbReference type="GO" id="GO:0005737">
    <property type="term" value="C:cytoplasm"/>
    <property type="evidence" value="ECO:0000250"/>
    <property type="project" value="UniProtKB"/>
</dbReference>
<dbReference type="GO" id="GO:0005634">
    <property type="term" value="C:nucleus"/>
    <property type="evidence" value="ECO:0000250"/>
    <property type="project" value="UniProtKB"/>
</dbReference>
<dbReference type="GO" id="GO:0019901">
    <property type="term" value="F:protein kinase binding"/>
    <property type="evidence" value="ECO:0007669"/>
    <property type="project" value="TreeGrafter"/>
</dbReference>
<dbReference type="GO" id="GO:0032147">
    <property type="term" value="P:activation of protein kinase activity"/>
    <property type="evidence" value="ECO:0000250"/>
    <property type="project" value="UniProtKB"/>
</dbReference>
<dbReference type="GO" id="GO:0051301">
    <property type="term" value="P:cell division"/>
    <property type="evidence" value="ECO:0007669"/>
    <property type="project" value="UniProtKB-KW"/>
</dbReference>
<dbReference type="GO" id="GO:0007088">
    <property type="term" value="P:regulation of mitotic nuclear division"/>
    <property type="evidence" value="ECO:0007669"/>
    <property type="project" value="TreeGrafter"/>
</dbReference>
<dbReference type="GO" id="GO:0060236">
    <property type="term" value="P:regulation of mitotic spindle organization"/>
    <property type="evidence" value="ECO:0007669"/>
    <property type="project" value="TreeGrafter"/>
</dbReference>
<dbReference type="InterPro" id="IPR023252">
    <property type="entry name" value="Aurora_borealis_protein"/>
</dbReference>
<dbReference type="PANTHER" id="PTHR14728">
    <property type="entry name" value="PROTEIN AURORA BOREALIS"/>
    <property type="match status" value="1"/>
</dbReference>
<dbReference type="PANTHER" id="PTHR14728:SF2">
    <property type="entry name" value="PROTEIN AURORA BOREALIS"/>
    <property type="match status" value="1"/>
</dbReference>
<dbReference type="Pfam" id="PF15280">
    <property type="entry name" value="BORA_N"/>
    <property type="match status" value="1"/>
</dbReference>
<dbReference type="PRINTS" id="PR02038">
    <property type="entry name" value="AURORABORA"/>
</dbReference>
<name>BORA_DROPS</name>
<feature type="chain" id="PRO_0000273211" description="Protein aurora borealis">
    <location>
        <begin position="1"/>
        <end position="544"/>
    </location>
</feature>
<feature type="region of interest" description="Disordered" evidence="2">
    <location>
        <begin position="28"/>
        <end position="55"/>
    </location>
</feature>
<feature type="region of interest" description="Disordered" evidence="2">
    <location>
        <begin position="348"/>
        <end position="391"/>
    </location>
</feature>
<feature type="region of interest" description="Disordered" evidence="2">
    <location>
        <begin position="422"/>
        <end position="480"/>
    </location>
</feature>
<feature type="compositionally biased region" description="Polar residues" evidence="2">
    <location>
        <begin position="30"/>
        <end position="55"/>
    </location>
</feature>
<feature type="compositionally biased region" description="Acidic residues" evidence="2">
    <location>
        <begin position="422"/>
        <end position="445"/>
    </location>
</feature>
<feature type="compositionally biased region" description="Low complexity" evidence="2">
    <location>
        <begin position="450"/>
        <end position="461"/>
    </location>
</feature>
<protein>
    <recommendedName>
        <fullName>Protein aurora borealis</fullName>
    </recommendedName>
</protein>
<proteinExistence type="inferred from homology"/>
<gene>
    <name type="primary">bora</name>
    <name type="ORF">GA19938</name>
</gene>
<comment type="function">
    <text evidence="1">Required for the activation of Aurora-A (aur) at the onset of mitosis.</text>
</comment>
<comment type="subunit">
    <text evidence="1">Interacts with aur.</text>
</comment>
<comment type="subcellular location">
    <subcellularLocation>
        <location evidence="1">Cytoplasm</location>
    </subcellularLocation>
    <subcellularLocation>
        <location evidence="1">Nucleus</location>
    </subcellularLocation>
    <text evidence="1">Shuttles between the cytoplasm and the nucleus. In interphase cells, it is nuclear. Upon entry into mitosis, it is excluded from the nucleus and translocates into the cytoplasm in a Cdc2-dependent manner (By similarity).</text>
</comment>
<comment type="PTM">
    <text evidence="1">Phosphorylated by aur.</text>
</comment>
<comment type="similarity">
    <text evidence="3">Belongs to the BORA family.</text>
</comment>
<keyword id="KW-0131">Cell cycle</keyword>
<keyword id="KW-0132">Cell division</keyword>
<keyword id="KW-0963">Cytoplasm</keyword>
<keyword id="KW-0498">Mitosis</keyword>
<keyword id="KW-0539">Nucleus</keyword>
<keyword id="KW-0597">Phosphoprotein</keyword>
<keyword id="KW-1185">Reference proteome</keyword>
<sequence length="544" mass="59727">MYTDEVRTPQALKSRYFTNLGDLNCRTRRNSATGNSSVASAATPTNGGKQNTKCSPQMSTLVCTPPPKRFHKIRNPFEGALADRLHLPLIASPSLFRARTPQLSSTQFEWNIDEVSQLTPADVEPHETQFHDSPDPELESKAQMAISAFFKESLIVPSPVDCPLRKNRIILNADHTPISNKSSSGRRGRDCSVQTELTLPPILPKALEEALRPYLQPHLAGGTSGRFKSRSSGSDVFNSSMRRKLFDLHNVIVLGEKEAVQSPQMVGSSPQGKQTMFAGRLSDSASGEGSFGSLSPIRNLCGLPLGTPDDGNRSSKRKLLLINELEFPSPIAPPEHLSRRLVHSKVEASISSNEQHDTLSELTGTGRPACRFTPDRSSSPMQALEHSDSSINQRVSRLRVNSTRQLPSQSFLETVDQALFEEVEADDTDEPEADQESDEDEEEAEAMQLSTISFNCSSSNSDTPRGHRRHRSANRKNLSQSFSANLEEVEAQRVKTAPPVINPPAQRIGLYRVDSGFNETSIISTFACSQDISMACCSTPSTRP</sequence>
<organism>
    <name type="scientific">Drosophila pseudoobscura pseudoobscura</name>
    <name type="common">Fruit fly</name>
    <dbReference type="NCBI Taxonomy" id="46245"/>
    <lineage>
        <taxon>Eukaryota</taxon>
        <taxon>Metazoa</taxon>
        <taxon>Ecdysozoa</taxon>
        <taxon>Arthropoda</taxon>
        <taxon>Hexapoda</taxon>
        <taxon>Insecta</taxon>
        <taxon>Pterygota</taxon>
        <taxon>Neoptera</taxon>
        <taxon>Endopterygota</taxon>
        <taxon>Diptera</taxon>
        <taxon>Brachycera</taxon>
        <taxon>Muscomorpha</taxon>
        <taxon>Ephydroidea</taxon>
        <taxon>Drosophilidae</taxon>
        <taxon>Drosophila</taxon>
        <taxon>Sophophora</taxon>
    </lineage>
</organism>
<reference key="1">
    <citation type="journal article" date="2005" name="Genome Res.">
        <title>Comparative genome sequencing of Drosophila pseudoobscura: chromosomal, gene, and cis-element evolution.</title>
        <authorList>
            <person name="Richards S."/>
            <person name="Liu Y."/>
            <person name="Bettencourt B.R."/>
            <person name="Hradecky P."/>
            <person name="Letovsky S."/>
            <person name="Nielsen R."/>
            <person name="Thornton K."/>
            <person name="Hubisz M.J."/>
            <person name="Chen R."/>
            <person name="Meisel R.P."/>
            <person name="Couronne O."/>
            <person name="Hua S."/>
            <person name="Smith M.A."/>
            <person name="Zhang P."/>
            <person name="Liu J."/>
            <person name="Bussemaker H.J."/>
            <person name="van Batenburg M.F."/>
            <person name="Howells S.L."/>
            <person name="Scherer S.E."/>
            <person name="Sodergren E."/>
            <person name="Matthews B.B."/>
            <person name="Crosby M.A."/>
            <person name="Schroeder A.J."/>
            <person name="Ortiz-Barrientos D."/>
            <person name="Rives C.M."/>
            <person name="Metzker M.L."/>
            <person name="Muzny D.M."/>
            <person name="Scott G."/>
            <person name="Steffen D."/>
            <person name="Wheeler D.A."/>
            <person name="Worley K.C."/>
            <person name="Havlak P."/>
            <person name="Durbin K.J."/>
            <person name="Egan A."/>
            <person name="Gill R."/>
            <person name="Hume J."/>
            <person name="Morgan M.B."/>
            <person name="Miner G."/>
            <person name="Hamilton C."/>
            <person name="Huang Y."/>
            <person name="Waldron L."/>
            <person name="Verduzco D."/>
            <person name="Clerc-Blankenburg K.P."/>
            <person name="Dubchak I."/>
            <person name="Noor M.A.F."/>
            <person name="Anderson W."/>
            <person name="White K.P."/>
            <person name="Clark A.G."/>
            <person name="Schaeffer S.W."/>
            <person name="Gelbart W.M."/>
            <person name="Weinstock G.M."/>
            <person name="Gibbs R.A."/>
        </authorList>
    </citation>
    <scope>NUCLEOTIDE SEQUENCE [LARGE SCALE GENOMIC DNA]</scope>
    <source>
        <strain>MV2-25 / Tucson 14011-0121.94</strain>
    </source>
</reference>